<sequence>MSLVLLPAVDVVNGEAVRLVQGEAGSETGYGSPRDAALAWQNDGAEWVHIVDLDAAFGRGSNRELLADVVGELDVQVELSGGIRDDASLEAALATGCGRVNLGTAAIENPEWCARAIAKYGEKIAVGLDVRLVDGEYQLRGRGWVTEGGNLWETLARLDKDGCSRYVVTDVSKDGTLTGPNLELLAQVCAATDAPVVASGGVSTIDDLRAIAGLVDRGVEGSIVGKALYAGRFTLPEALAAVSG</sequence>
<gene>
    <name evidence="1" type="primary">hisA</name>
    <name type="ordered locus">ROP_07500</name>
</gene>
<reference key="1">
    <citation type="submission" date="2009-03" db="EMBL/GenBank/DDBJ databases">
        <title>Comparison of the complete genome sequences of Rhodococcus erythropolis PR4 and Rhodococcus opacus B4.</title>
        <authorList>
            <person name="Takarada H."/>
            <person name="Sekine M."/>
            <person name="Hosoyama A."/>
            <person name="Yamada R."/>
            <person name="Fujisawa T."/>
            <person name="Omata S."/>
            <person name="Shimizu A."/>
            <person name="Tsukatani N."/>
            <person name="Tanikawa S."/>
            <person name="Fujita N."/>
            <person name="Harayama S."/>
        </authorList>
    </citation>
    <scope>NUCLEOTIDE SEQUENCE [LARGE SCALE GENOMIC DNA]</scope>
    <source>
        <strain>B4</strain>
    </source>
</reference>
<evidence type="ECO:0000255" key="1">
    <source>
        <dbReference type="HAMAP-Rule" id="MF_01014"/>
    </source>
</evidence>
<accession>C1ATY9</accession>
<name>HIS4_RHOOB</name>
<keyword id="KW-0028">Amino-acid biosynthesis</keyword>
<keyword id="KW-0963">Cytoplasm</keyword>
<keyword id="KW-0368">Histidine biosynthesis</keyword>
<keyword id="KW-0413">Isomerase</keyword>
<proteinExistence type="inferred from homology"/>
<organism>
    <name type="scientific">Rhodococcus opacus (strain B4)</name>
    <dbReference type="NCBI Taxonomy" id="632772"/>
    <lineage>
        <taxon>Bacteria</taxon>
        <taxon>Bacillati</taxon>
        <taxon>Actinomycetota</taxon>
        <taxon>Actinomycetes</taxon>
        <taxon>Mycobacteriales</taxon>
        <taxon>Nocardiaceae</taxon>
        <taxon>Rhodococcus</taxon>
    </lineage>
</organism>
<dbReference type="EC" id="5.3.1.16" evidence="1"/>
<dbReference type="EMBL" id="AP011115">
    <property type="protein sequence ID" value="BAH48997.1"/>
    <property type="molecule type" value="Genomic_DNA"/>
</dbReference>
<dbReference type="SMR" id="C1ATY9"/>
<dbReference type="STRING" id="632772.ROP_07500"/>
<dbReference type="KEGG" id="rop:ROP_07500"/>
<dbReference type="PATRIC" id="fig|632772.20.peg.813"/>
<dbReference type="HOGENOM" id="CLU_048577_1_1_11"/>
<dbReference type="OrthoDB" id="9807749at2"/>
<dbReference type="UniPathway" id="UPA00031">
    <property type="reaction ID" value="UER00009"/>
</dbReference>
<dbReference type="Proteomes" id="UP000002212">
    <property type="component" value="Chromosome"/>
</dbReference>
<dbReference type="GO" id="GO:0005737">
    <property type="term" value="C:cytoplasm"/>
    <property type="evidence" value="ECO:0007669"/>
    <property type="project" value="UniProtKB-SubCell"/>
</dbReference>
<dbReference type="GO" id="GO:0003949">
    <property type="term" value="F:1-(5-phosphoribosyl)-5-[(5-phosphoribosylamino)methylideneamino]imidazole-4-carboxamide isomerase activity"/>
    <property type="evidence" value="ECO:0007669"/>
    <property type="project" value="UniProtKB-UniRule"/>
</dbReference>
<dbReference type="GO" id="GO:0004640">
    <property type="term" value="F:phosphoribosylanthranilate isomerase activity"/>
    <property type="evidence" value="ECO:0007669"/>
    <property type="project" value="InterPro"/>
</dbReference>
<dbReference type="GO" id="GO:0000105">
    <property type="term" value="P:L-histidine biosynthetic process"/>
    <property type="evidence" value="ECO:0007669"/>
    <property type="project" value="UniProtKB-UniRule"/>
</dbReference>
<dbReference type="GO" id="GO:0000162">
    <property type="term" value="P:L-tryptophan biosynthetic process"/>
    <property type="evidence" value="ECO:0007669"/>
    <property type="project" value="InterPro"/>
</dbReference>
<dbReference type="CDD" id="cd04732">
    <property type="entry name" value="HisA"/>
    <property type="match status" value="1"/>
</dbReference>
<dbReference type="FunFam" id="3.20.20.70:FF:000009">
    <property type="entry name" value="1-(5-phosphoribosyl)-5-[(5-phosphoribosylamino)methylideneamino] imidazole-4-carboxamide isomerase"/>
    <property type="match status" value="1"/>
</dbReference>
<dbReference type="Gene3D" id="3.20.20.70">
    <property type="entry name" value="Aldolase class I"/>
    <property type="match status" value="1"/>
</dbReference>
<dbReference type="HAMAP" id="MF_01014">
    <property type="entry name" value="HisA"/>
    <property type="match status" value="1"/>
</dbReference>
<dbReference type="InterPro" id="IPR013785">
    <property type="entry name" value="Aldolase_TIM"/>
</dbReference>
<dbReference type="InterPro" id="IPR006062">
    <property type="entry name" value="His_biosynth"/>
</dbReference>
<dbReference type="InterPro" id="IPR010188">
    <property type="entry name" value="HisA/PriA_Actinobacteria"/>
</dbReference>
<dbReference type="InterPro" id="IPR044524">
    <property type="entry name" value="Isoase_HisA-like"/>
</dbReference>
<dbReference type="InterPro" id="IPR023016">
    <property type="entry name" value="Isoase_HisA-like_bact"/>
</dbReference>
<dbReference type="InterPro" id="IPR011060">
    <property type="entry name" value="RibuloseP-bd_barrel"/>
</dbReference>
<dbReference type="NCBIfam" id="TIGR01919">
    <property type="entry name" value="hisA-trpF"/>
    <property type="match status" value="1"/>
</dbReference>
<dbReference type="PANTHER" id="PTHR43090">
    <property type="entry name" value="1-(5-PHOSPHORIBOSYL)-5-[(5-PHOSPHORIBOSYLAMINO)METHYLIDENEAMINO] IMIDAZOLE-4-CARBOXAMIDE ISOMERASE"/>
    <property type="match status" value="1"/>
</dbReference>
<dbReference type="PANTHER" id="PTHR43090:SF2">
    <property type="entry name" value="1-(5-PHOSPHORIBOSYL)-5-[(5-PHOSPHORIBOSYLAMINO)METHYLIDENEAMINO] IMIDAZOLE-4-CARBOXAMIDE ISOMERASE"/>
    <property type="match status" value="1"/>
</dbReference>
<dbReference type="Pfam" id="PF00977">
    <property type="entry name" value="His_biosynth"/>
    <property type="match status" value="1"/>
</dbReference>
<dbReference type="SUPFAM" id="SSF51366">
    <property type="entry name" value="Ribulose-phoshate binding barrel"/>
    <property type="match status" value="1"/>
</dbReference>
<feature type="chain" id="PRO_1000148984" description="1-(5-phosphoribosyl)-5-[(5-phosphoribosylamino)methylideneamino] imidazole-4-carboxamide isomerase">
    <location>
        <begin position="1"/>
        <end position="244"/>
    </location>
</feature>
<feature type="active site" description="Proton acceptor" evidence="1">
    <location>
        <position position="10"/>
    </location>
</feature>
<feature type="active site" description="Proton donor" evidence="1">
    <location>
        <position position="129"/>
    </location>
</feature>
<protein>
    <recommendedName>
        <fullName evidence="1">1-(5-phosphoribosyl)-5-[(5-phosphoribosylamino)methylideneamino] imidazole-4-carboxamide isomerase</fullName>
        <ecNumber evidence="1">5.3.1.16</ecNumber>
    </recommendedName>
    <alternativeName>
        <fullName evidence="1">Phosphoribosylformimino-5-aminoimidazole carboxamide ribotide isomerase</fullName>
    </alternativeName>
</protein>
<comment type="catalytic activity">
    <reaction evidence="1">
        <text>1-(5-phospho-beta-D-ribosyl)-5-[(5-phospho-beta-D-ribosylamino)methylideneamino]imidazole-4-carboxamide = 5-[(5-phospho-1-deoxy-D-ribulos-1-ylimino)methylamino]-1-(5-phospho-beta-D-ribosyl)imidazole-4-carboxamide</text>
        <dbReference type="Rhea" id="RHEA:15469"/>
        <dbReference type="ChEBI" id="CHEBI:58435"/>
        <dbReference type="ChEBI" id="CHEBI:58525"/>
        <dbReference type="EC" id="5.3.1.16"/>
    </reaction>
</comment>
<comment type="pathway">
    <text evidence="1">Amino-acid biosynthesis; L-histidine biosynthesis; L-histidine from 5-phospho-alpha-D-ribose 1-diphosphate: step 4/9.</text>
</comment>
<comment type="subcellular location">
    <subcellularLocation>
        <location evidence="1">Cytoplasm</location>
    </subcellularLocation>
</comment>
<comment type="similarity">
    <text evidence="1">Belongs to the HisA/HisF family.</text>
</comment>